<dbReference type="EMBL" id="AL607090">
    <property type="status" value="NOT_ANNOTATED_CDS"/>
    <property type="molecule type" value="Genomic_DNA"/>
</dbReference>
<dbReference type="EMBL" id="AL627328">
    <property type="status" value="NOT_ANNOTATED_CDS"/>
    <property type="molecule type" value="Genomic_DNA"/>
</dbReference>
<dbReference type="EMBL" id="BC118004">
    <property type="protein sequence ID" value="AAI18005.1"/>
    <property type="molecule type" value="mRNA"/>
</dbReference>
<dbReference type="EMBL" id="AF245444">
    <property type="protein sequence ID" value="AAF90049.1"/>
    <property type="molecule type" value="mRNA"/>
</dbReference>
<dbReference type="CCDS" id="CCDS38878.1"/>
<dbReference type="RefSeq" id="NP_001074566.1">
    <property type="nucleotide sequence ID" value="NM_001081097.3"/>
</dbReference>
<dbReference type="SMR" id="B1AS29"/>
<dbReference type="BioGRID" id="200065">
    <property type="interactions" value="4"/>
</dbReference>
<dbReference type="CORUM" id="B1AS29"/>
<dbReference type="FunCoup" id="B1AS29">
    <property type="interactions" value="644"/>
</dbReference>
<dbReference type="IntAct" id="B1AS29">
    <property type="interactions" value="1"/>
</dbReference>
<dbReference type="STRING" id="10090.ENSMUSP00000030676"/>
<dbReference type="GlyConnect" id="2348">
    <property type="glycosylation" value="5 N-Linked glycans (1 site)"/>
</dbReference>
<dbReference type="GlyCosmos" id="B1AS29">
    <property type="glycosylation" value="10 sites, 5 glycans"/>
</dbReference>
<dbReference type="GlyGen" id="B1AS29">
    <property type="glycosylation" value="12 sites, 12 N-linked glycans (7 sites), 1 O-linked glycan (2 sites)"/>
</dbReference>
<dbReference type="iPTMnet" id="B1AS29"/>
<dbReference type="PhosphoSitePlus" id="B1AS29"/>
<dbReference type="SwissPalm" id="B1AS29"/>
<dbReference type="PaxDb" id="10090-ENSMUSP00000030676"/>
<dbReference type="PeptideAtlas" id="B1AS29"/>
<dbReference type="ProteomicsDB" id="269630"/>
<dbReference type="Antibodypedia" id="3095">
    <property type="antibodies" value="189 antibodies from 27 providers"/>
</dbReference>
<dbReference type="DNASU" id="14807"/>
<dbReference type="Ensembl" id="ENSMUST00000030676.8">
    <property type="protein sequence ID" value="ENSMUSP00000030676.8"/>
    <property type="gene ID" value="ENSMUSG00000001985.10"/>
</dbReference>
<dbReference type="GeneID" id="14807"/>
<dbReference type="KEGG" id="mmu:14807"/>
<dbReference type="UCSC" id="uc008usa.2">
    <property type="organism name" value="mouse"/>
</dbReference>
<dbReference type="AGR" id="MGI:95816"/>
<dbReference type="CTD" id="2899"/>
<dbReference type="MGI" id="MGI:95816">
    <property type="gene designation" value="Grik3"/>
</dbReference>
<dbReference type="VEuPathDB" id="HostDB:ENSMUSG00000001985"/>
<dbReference type="eggNOG" id="KOG1052">
    <property type="taxonomic scope" value="Eukaryota"/>
</dbReference>
<dbReference type="GeneTree" id="ENSGT00940000159465"/>
<dbReference type="HOGENOM" id="CLU_007257_1_1_1"/>
<dbReference type="InParanoid" id="B1AS29"/>
<dbReference type="OMA" id="SMTCLGD"/>
<dbReference type="OrthoDB" id="5984008at2759"/>
<dbReference type="PhylomeDB" id="B1AS29"/>
<dbReference type="TreeFam" id="TF334668"/>
<dbReference type="Reactome" id="R-MMU-451308">
    <property type="pathway name" value="Activation of Ca-permeable Kainate Receptor"/>
</dbReference>
<dbReference type="Reactome" id="R-MMU-500657">
    <property type="pathway name" value="Presynaptic function of Kainate receptors"/>
</dbReference>
<dbReference type="BioGRID-ORCS" id="14807">
    <property type="hits" value="1 hit in 79 CRISPR screens"/>
</dbReference>
<dbReference type="ChiTaRS" id="Grik3">
    <property type="organism name" value="mouse"/>
</dbReference>
<dbReference type="PRO" id="PR:B1AS29"/>
<dbReference type="Proteomes" id="UP000000589">
    <property type="component" value="Chromosome 4"/>
</dbReference>
<dbReference type="RNAct" id="B1AS29">
    <property type="molecule type" value="protein"/>
</dbReference>
<dbReference type="Bgee" id="ENSMUSG00000001985">
    <property type="expression patterns" value="Expressed in median eminence of neurohypophysis and 135 other cell types or tissues"/>
</dbReference>
<dbReference type="GO" id="GO:0098978">
    <property type="term" value="C:glutamatergic synapse"/>
    <property type="evidence" value="ECO:0000314"/>
    <property type="project" value="SynGO"/>
</dbReference>
<dbReference type="GO" id="GO:0005886">
    <property type="term" value="C:plasma membrane"/>
    <property type="evidence" value="ECO:0000314"/>
    <property type="project" value="MGI"/>
</dbReference>
<dbReference type="GO" id="GO:0098839">
    <property type="term" value="C:postsynaptic density membrane"/>
    <property type="evidence" value="ECO:0000314"/>
    <property type="project" value="SynGO"/>
</dbReference>
<dbReference type="GO" id="GO:0001640">
    <property type="term" value="F:adenylate cyclase inhibiting G protein-coupled glutamate receptor activity"/>
    <property type="evidence" value="ECO:0007669"/>
    <property type="project" value="Ensembl"/>
</dbReference>
<dbReference type="GO" id="GO:0022849">
    <property type="term" value="F:glutamate-gated calcium ion channel activity"/>
    <property type="evidence" value="ECO:0000314"/>
    <property type="project" value="UniProtKB"/>
</dbReference>
<dbReference type="GO" id="GO:0004970">
    <property type="term" value="F:glutamate-gated receptor activity"/>
    <property type="evidence" value="ECO:0000250"/>
    <property type="project" value="UniProtKB"/>
</dbReference>
<dbReference type="GO" id="GO:0015277">
    <property type="term" value="F:kainate selective glutamate receptor activity"/>
    <property type="evidence" value="ECO:0007669"/>
    <property type="project" value="Ensembl"/>
</dbReference>
<dbReference type="GO" id="GO:0099507">
    <property type="term" value="F:ligand-gated monoatomic ion channel activity involved in regulation of presynaptic membrane potential"/>
    <property type="evidence" value="ECO:0000314"/>
    <property type="project" value="SynGO"/>
</dbReference>
<dbReference type="GO" id="GO:0042391">
    <property type="term" value="P:regulation of membrane potential"/>
    <property type="evidence" value="ECO:0000266"/>
    <property type="project" value="MGI"/>
</dbReference>
<dbReference type="CDD" id="cd06382">
    <property type="entry name" value="PBP1_iGluR_Kainate"/>
    <property type="match status" value="1"/>
</dbReference>
<dbReference type="CDD" id="cd13723">
    <property type="entry name" value="PBP2_iGluR_Kainate_GluR7"/>
    <property type="match status" value="1"/>
</dbReference>
<dbReference type="FunFam" id="3.40.50.2300:FF:000010">
    <property type="entry name" value="Glutamate ionotropic receptor kainate type subunit 1"/>
    <property type="match status" value="1"/>
</dbReference>
<dbReference type="FunFam" id="3.40.190.10:FF:000210">
    <property type="entry name" value="Glutamate receptor ionotropic, kainate 1"/>
    <property type="match status" value="1"/>
</dbReference>
<dbReference type="FunFam" id="3.40.190.10:FF:000240">
    <property type="entry name" value="Glutamate receptor ionotropic, kainate 2"/>
    <property type="match status" value="1"/>
</dbReference>
<dbReference type="FunFam" id="1.10.287.70:FF:000010">
    <property type="entry name" value="Putative glutamate receptor ionotropic kainate 1"/>
    <property type="match status" value="1"/>
</dbReference>
<dbReference type="Gene3D" id="1.10.287.70">
    <property type="match status" value="1"/>
</dbReference>
<dbReference type="Gene3D" id="3.40.50.2300">
    <property type="match status" value="2"/>
</dbReference>
<dbReference type="Gene3D" id="3.40.190.10">
    <property type="entry name" value="Periplasmic binding protein-like II"/>
    <property type="match status" value="1"/>
</dbReference>
<dbReference type="InterPro" id="IPR001828">
    <property type="entry name" value="ANF_lig-bd_rcpt"/>
</dbReference>
<dbReference type="InterPro" id="IPR019594">
    <property type="entry name" value="Glu/Gly-bd"/>
</dbReference>
<dbReference type="InterPro" id="IPR001508">
    <property type="entry name" value="Iono_Glu_rcpt_met"/>
</dbReference>
<dbReference type="InterPro" id="IPR015683">
    <property type="entry name" value="Ionotropic_Glu_rcpt"/>
</dbReference>
<dbReference type="InterPro" id="IPR001320">
    <property type="entry name" value="Iontro_rcpt_C"/>
</dbReference>
<dbReference type="InterPro" id="IPR028082">
    <property type="entry name" value="Peripla_BP_I"/>
</dbReference>
<dbReference type="PANTHER" id="PTHR18966">
    <property type="entry name" value="IONOTROPIC GLUTAMATE RECEPTOR"/>
    <property type="match status" value="1"/>
</dbReference>
<dbReference type="Pfam" id="PF01094">
    <property type="entry name" value="ANF_receptor"/>
    <property type="match status" value="1"/>
</dbReference>
<dbReference type="Pfam" id="PF00060">
    <property type="entry name" value="Lig_chan"/>
    <property type="match status" value="1"/>
</dbReference>
<dbReference type="Pfam" id="PF10613">
    <property type="entry name" value="Lig_chan-Glu_bd"/>
    <property type="match status" value="1"/>
</dbReference>
<dbReference type="PRINTS" id="PR00177">
    <property type="entry name" value="NMDARECEPTOR"/>
</dbReference>
<dbReference type="SMART" id="SM00918">
    <property type="entry name" value="Lig_chan-Glu_bd"/>
    <property type="match status" value="1"/>
</dbReference>
<dbReference type="SMART" id="SM00079">
    <property type="entry name" value="PBPe"/>
    <property type="match status" value="1"/>
</dbReference>
<dbReference type="SUPFAM" id="SSF53822">
    <property type="entry name" value="Periplasmic binding protein-like I"/>
    <property type="match status" value="1"/>
</dbReference>
<dbReference type="SUPFAM" id="SSF53850">
    <property type="entry name" value="Periplasmic binding protein-like II"/>
    <property type="match status" value="1"/>
</dbReference>
<protein>
    <recommendedName>
        <fullName>Glutamate receptor ionotropic, kainate 3</fullName>
        <shortName>GluK3</shortName>
    </recommendedName>
    <alternativeName>
        <fullName>Glutamate receptor 7</fullName>
        <shortName>GluR-7</shortName>
        <shortName>GluR7</shortName>
    </alternativeName>
</protein>
<accession>B1AS29</accession>
<accession>Q17R20</accession>
<accession>Q9JIA8</accession>
<keyword id="KW-1003">Cell membrane</keyword>
<keyword id="KW-1015">Disulfide bond</keyword>
<keyword id="KW-0325">Glycoprotein</keyword>
<keyword id="KW-0407">Ion channel</keyword>
<keyword id="KW-0406">Ion transport</keyword>
<keyword id="KW-1017">Isopeptide bond</keyword>
<keyword id="KW-1071">Ligand-gated ion channel</keyword>
<keyword id="KW-0472">Membrane</keyword>
<keyword id="KW-0597">Phosphoprotein</keyword>
<keyword id="KW-0628">Postsynaptic cell membrane</keyword>
<keyword id="KW-0675">Receptor</keyword>
<keyword id="KW-1185">Reference proteome</keyword>
<keyword id="KW-0732">Signal</keyword>
<keyword id="KW-0770">Synapse</keyword>
<keyword id="KW-0812">Transmembrane</keyword>
<keyword id="KW-1133">Transmembrane helix</keyword>
<keyword id="KW-0813">Transport</keyword>
<keyword id="KW-0832">Ubl conjugation</keyword>
<reference key="1">
    <citation type="journal article" date="2009" name="PLoS Biol.">
        <title>Lineage-specific biology revealed by a finished genome assembly of the mouse.</title>
        <authorList>
            <person name="Church D.M."/>
            <person name="Goodstadt L."/>
            <person name="Hillier L.W."/>
            <person name="Zody M.C."/>
            <person name="Goldstein S."/>
            <person name="She X."/>
            <person name="Bult C.J."/>
            <person name="Agarwala R."/>
            <person name="Cherry J.L."/>
            <person name="DiCuccio M."/>
            <person name="Hlavina W."/>
            <person name="Kapustin Y."/>
            <person name="Meric P."/>
            <person name="Maglott D."/>
            <person name="Birtle Z."/>
            <person name="Marques A.C."/>
            <person name="Graves T."/>
            <person name="Zhou S."/>
            <person name="Teague B."/>
            <person name="Potamousis K."/>
            <person name="Churas C."/>
            <person name="Place M."/>
            <person name="Herschleb J."/>
            <person name="Runnheim R."/>
            <person name="Forrest D."/>
            <person name="Amos-Landgraf J."/>
            <person name="Schwartz D.C."/>
            <person name="Cheng Z."/>
            <person name="Lindblad-Toh K."/>
            <person name="Eichler E.E."/>
            <person name="Ponting C.P."/>
        </authorList>
    </citation>
    <scope>NUCLEOTIDE SEQUENCE [LARGE SCALE GENOMIC DNA]</scope>
    <source>
        <strain>C57BL/6J</strain>
    </source>
</reference>
<reference key="2">
    <citation type="journal article" date="2004" name="Genome Res.">
        <title>The status, quality, and expansion of the NIH full-length cDNA project: the Mammalian Gene Collection (MGC).</title>
        <authorList>
            <consortium name="The MGC Project Team"/>
        </authorList>
    </citation>
    <scope>NUCLEOTIDE SEQUENCE [LARGE SCALE MRNA] OF 3-897</scope>
</reference>
<reference key="3">
    <citation type="journal article" date="2000" name="J. Neurosci.">
        <title>Unequal expression of allelic kainate receptor GluR7 mRNAs in human brains.</title>
        <authorList>
            <person name="Schiffer H.H."/>
            <person name="Swanson G.T."/>
            <person name="Masliah E."/>
            <person name="Heinemann S.F."/>
        </authorList>
    </citation>
    <scope>NUCLEOTIDE SEQUENCE [MRNA] OF 403-919</scope>
    <scope>TISSUE SPECIFICITY</scope>
    <source>
        <strain>C57BL/6J</strain>
        <tissue>Brain</tissue>
    </source>
</reference>
<reference key="4">
    <citation type="journal article" date="2007" name="Proc. Natl. Acad. Sci. U.S.A.">
        <title>GluR7 is an essential subunit of presynaptic kainate autoreceptors at hippocampal mossy fiber synapses.</title>
        <authorList>
            <person name="Pinheiro P.S."/>
            <person name="Perrais D."/>
            <person name="Coussen F."/>
            <person name="Barhanin J."/>
            <person name="Bettler B."/>
            <person name="Mann J.R."/>
            <person name="Malva J.O."/>
            <person name="Heinemann S.F."/>
            <person name="Mulle C."/>
        </authorList>
    </citation>
    <scope>FUNCTION</scope>
    <scope>TRANSPORTER ACTIVITY</scope>
    <scope>SUBUNIT</scope>
    <scope>SUBCELLULAR LOCATION</scope>
</reference>
<reference key="5">
    <citation type="journal article" date="2009" name="J. Neurosci.">
        <title>Atypical functional properties of GluK3-containing kainate receptors.</title>
        <authorList>
            <person name="Perrais D."/>
            <person name="Coussen F."/>
            <person name="Mulle C."/>
        </authorList>
    </citation>
    <scope>FUNCTION</scope>
    <scope>TRANSPORTER ACTIVITY</scope>
    <scope>ACTIVITY REGULATION</scope>
    <scope>MUTAGENESIS OF MET-618 AND SER-620</scope>
</reference>
<reference key="6">
    <citation type="journal article" date="2010" name="Cell">
        <title>A tissue-specific atlas of mouse protein phosphorylation and expression.</title>
        <authorList>
            <person name="Huttlin E.L."/>
            <person name="Jedrychowski M.P."/>
            <person name="Elias J.E."/>
            <person name="Goswami T."/>
            <person name="Rad R."/>
            <person name="Beausoleil S.A."/>
            <person name="Villen J."/>
            <person name="Haas W."/>
            <person name="Sowa M.E."/>
            <person name="Gygi S.P."/>
        </authorList>
    </citation>
    <scope>IDENTIFICATION BY MASS SPECTROMETRY [LARGE SCALE ANALYSIS]</scope>
    <source>
        <tissue>Brain</tissue>
    </source>
</reference>
<proteinExistence type="evidence at protein level"/>
<gene>
    <name type="primary">Grik3</name>
    <name type="synonym">Glur7</name>
</gene>
<sequence>MTAPWRRLRSLVWEYWAGFLVCAFWIPDSRGMPHVIRIGGIFEYADGPNAQVMNAEEHAFRFSANIINRNRTLLPNTTLTYDIQRIHFHDSFEATKKACDQLALGVVAIFGPSQGSCTNAVQSICNALEVPHIQLRWKHHPLDNKDTFYVNLYPDYASLSHAILDLVQSLKWRSATVVYDDSTGLIRLQELIMAPSRYNIRLKIRQLPIDSDDSRPLLKEMKRGREFRIIFDCSHTMAAQILKQAMAMGMMTEYYHFIFTTLDLYALDLEPYRYSGVNLTGFRILNVDNPHVSAIVEKWAMERLQAAPRAESGLLDGVMMTDAALLYDAVHIVSVCYQRAPQMTVNSLQCHRHKAWRFGGRFMNFIKEAQWEGLTGRIVFNKTSGLRTDFDLDIISLKEDGLEKVGVWSPADGLNITEVAKGRGPNVTDSLTNRSLIVTTVLEEPFVMFRKSDRTLYGNDRFEGYCIDLLKELAHILGFSYEIRLVEDGKYGAQDDKGQWNGMVKELIDHKADLAVAPLTITHVREKAIDFSKPFMTLGVSILYRKPNGTNPSVFSFLNPLSPDIWMYVLLAYLGVSCVLFVIARFSPYEWYDAHPCNPGSEVVENNFTLLNSFWFGMGSLMQQGSELMPKALSTRIIGGIWWFFTLIIISSYTANLAAFLTVERMESPIDSADDLAKQTKIEYGAVKDGATMTFFKKSKISTFEKMWAFMSSKPSALVKNNEEGIQRTLTADYALLMESTTIEYITQRNCNLTQIGGLIDSKGYGIGTPMGSPYRDKITIAILQLQEEDKLHIMKEKWWRGSGCPEEENKEASALGIQKIGGIFIVLAAGLVLSVLVAVGEFIYKLRKTAEREQRSFCSTVADEIRFSLTCQRRLKHKPQPPMMVKTDAVINMHTFNDRRLPGKDSMSCSTSLAPVFP</sequence>
<comment type="function">
    <text evidence="5 6">Ionotropic glutamate receptor that functions as a cation-permeable ligand-gated ion channel, gated by L-glutamate and the glutamatergic agonist kainic acid. Binding of the excitatory neurotransmitter L-glutamate induces a conformation change, leading to the opening of the cation channel, and thereby converts the chemical signal to an electrical impulse. The receptor then desensitizes rapidly and enters a transient inactive state, characterized by the presence of bound agonist (PubMed:17620617, PubMed:20007474). In association with GRIK2, involved in presynaptic facilitation of glutamate release at hippocampal mossy fiber synapses (PubMed:17620617).</text>
</comment>
<comment type="catalytic activity">
    <reaction evidence="5 6">
        <text>Ca(2+)(in) = Ca(2+)(out)</text>
        <dbReference type="Rhea" id="RHEA:29671"/>
        <dbReference type="ChEBI" id="CHEBI:29108"/>
    </reaction>
</comment>
<comment type="activity regulation">
    <text evidence="6">Glutamate-gated receptor activity inhibited by spermine.</text>
</comment>
<comment type="subunit">
    <text evidence="1 5">Homotetramer, and heterotetramer with either GRIK4 or GRIK5 (By similarity). Can form functional heteromeric receptors with GRIK2 (PubMed:17620617). Interacts with PRKCABP (By similarity). Interacts with NETO2 (By similarity).</text>
</comment>
<comment type="subcellular location">
    <subcellularLocation>
        <location evidence="5">Cell membrane</location>
        <topology evidence="3">Multi-pass membrane protein</topology>
    </subcellularLocation>
    <subcellularLocation>
        <location evidence="1">Postsynaptic cell membrane</location>
        <topology evidence="3">Multi-pass membrane protein</topology>
    </subcellularLocation>
</comment>
<comment type="tissue specificity">
    <text evidence="4">Detected in whole brain, cerebellum, brain cortex and hippocampus.</text>
</comment>
<comment type="miscellaneous">
    <text evidence="1">The postsynaptic actions of Glu are mediated by a variety of receptors that are named according to their selective agonists. This receptor binds domoate &gt; kainate &gt;&gt; L-glutamate = quisqualate &gt;&gt; AMPA = NMDA.</text>
</comment>
<comment type="similarity">
    <text evidence="7">Belongs to the glutamate-gated ion channel (TC 1.A.10.1) family. GRIK3 subfamily.</text>
</comment>
<evidence type="ECO:0000250" key="1">
    <source>
        <dbReference type="UniProtKB" id="P42264"/>
    </source>
</evidence>
<evidence type="ECO:0000250" key="2">
    <source>
        <dbReference type="UniProtKB" id="Q13002"/>
    </source>
</evidence>
<evidence type="ECO:0000255" key="3"/>
<evidence type="ECO:0000269" key="4">
    <source>
    </source>
</evidence>
<evidence type="ECO:0000269" key="5">
    <source>
    </source>
</evidence>
<evidence type="ECO:0000269" key="6">
    <source>
    </source>
</evidence>
<evidence type="ECO:0000305" key="7"/>
<feature type="signal peptide" evidence="1">
    <location>
        <begin position="1"/>
        <end position="31"/>
    </location>
</feature>
<feature type="chain" id="PRO_0000416793" description="Glutamate receptor ionotropic, kainate 3">
    <location>
        <begin position="32"/>
        <end position="919"/>
    </location>
</feature>
<feature type="topological domain" description="Extracellular">
    <location>
        <begin position="32"/>
        <end position="563"/>
    </location>
</feature>
<feature type="transmembrane region" description="Helical" evidence="3">
    <location>
        <begin position="564"/>
        <end position="584"/>
    </location>
</feature>
<feature type="topological domain" description="Cytoplasmic" evidence="3">
    <location>
        <begin position="585"/>
        <end position="636"/>
    </location>
</feature>
<feature type="transmembrane region" description="Helical" evidence="3">
    <location>
        <begin position="637"/>
        <end position="657"/>
    </location>
</feature>
<feature type="topological domain" description="Extracellular" evidence="3">
    <location>
        <begin position="658"/>
        <end position="820"/>
    </location>
</feature>
<feature type="transmembrane region" description="Helical" evidence="3">
    <location>
        <begin position="821"/>
        <end position="841"/>
    </location>
</feature>
<feature type="topological domain" description="Cytoplasmic" evidence="3">
    <location>
        <begin position="842"/>
        <end position="919"/>
    </location>
</feature>
<feature type="binding site" evidence="1">
    <location>
        <position position="518"/>
    </location>
    <ligand>
        <name>L-glutamate</name>
        <dbReference type="ChEBI" id="CHEBI:29985"/>
    </ligand>
</feature>
<feature type="binding site" evidence="1">
    <location>
        <position position="520"/>
    </location>
    <ligand>
        <name>L-glutamate</name>
        <dbReference type="ChEBI" id="CHEBI:29985"/>
    </ligand>
</feature>
<feature type="binding site" evidence="1">
    <location>
        <position position="525"/>
    </location>
    <ligand>
        <name>L-glutamate</name>
        <dbReference type="ChEBI" id="CHEBI:29985"/>
    </ligand>
</feature>
<feature type="binding site" evidence="1">
    <location>
        <position position="691"/>
    </location>
    <ligand>
        <name>L-glutamate</name>
        <dbReference type="ChEBI" id="CHEBI:29985"/>
    </ligand>
</feature>
<feature type="binding site" evidence="1">
    <location>
        <position position="692"/>
    </location>
    <ligand>
        <name>L-glutamate</name>
        <dbReference type="ChEBI" id="CHEBI:29985"/>
    </ligand>
</feature>
<feature type="binding site" evidence="1">
    <location>
        <position position="739"/>
    </location>
    <ligand>
        <name>L-glutamate</name>
        <dbReference type="ChEBI" id="CHEBI:29985"/>
    </ligand>
</feature>
<feature type="modified residue" description="Phosphoserine" evidence="2">
    <location>
        <position position="869"/>
    </location>
</feature>
<feature type="glycosylation site" description="N-linked (GlcNAc...) asparagine" evidence="3">
    <location>
        <position position="70"/>
    </location>
</feature>
<feature type="glycosylation site" description="N-linked (GlcNAc...) asparagine" evidence="3">
    <location>
        <position position="76"/>
    </location>
</feature>
<feature type="glycosylation site" description="N-linked (GlcNAc...) asparagine" evidence="3">
    <location>
        <position position="278"/>
    </location>
</feature>
<feature type="glycosylation site" description="N-linked (GlcNAc...) asparagine" evidence="3">
    <location>
        <position position="381"/>
    </location>
</feature>
<feature type="glycosylation site" description="N-linked (GlcNAc...) asparagine" evidence="3">
    <location>
        <position position="415"/>
    </location>
</feature>
<feature type="glycosylation site" description="N-linked (GlcNAc...) asparagine" evidence="3">
    <location>
        <position position="426"/>
    </location>
</feature>
<feature type="glycosylation site" description="N-linked (GlcNAc...) asparagine" evidence="3">
    <location>
        <position position="433"/>
    </location>
</feature>
<feature type="glycosylation site" description="N-linked (GlcNAc...) asparagine" evidence="3">
    <location>
        <position position="548"/>
    </location>
</feature>
<feature type="glycosylation site" description="N-linked (GlcNAc...) asparagine" evidence="3">
    <location>
        <position position="551"/>
    </location>
</feature>
<feature type="glycosylation site" description="N-linked (GlcNAc...) asparagine" evidence="3">
    <location>
        <position position="752"/>
    </location>
</feature>
<feature type="disulfide bond" evidence="1">
    <location>
        <begin position="99"/>
        <end position="350"/>
    </location>
</feature>
<feature type="cross-link" description="Glycyl lysine isopeptide (Lys-Gly) (interchain with G-Cter in SUMO1)" evidence="2">
    <location>
        <position position="887"/>
    </location>
</feature>
<feature type="mutagenesis site" description="Loss of spermine-binding; when associated with A-620." evidence="6">
    <original>M</original>
    <variation>V</variation>
    <location>
        <position position="618"/>
    </location>
</feature>
<feature type="mutagenesis site" description="Loss of spermine-binding; when associated with V-618." evidence="6">
    <original>S</original>
    <variation>A</variation>
    <location>
        <position position="620"/>
    </location>
</feature>
<organism>
    <name type="scientific">Mus musculus</name>
    <name type="common">Mouse</name>
    <dbReference type="NCBI Taxonomy" id="10090"/>
    <lineage>
        <taxon>Eukaryota</taxon>
        <taxon>Metazoa</taxon>
        <taxon>Chordata</taxon>
        <taxon>Craniata</taxon>
        <taxon>Vertebrata</taxon>
        <taxon>Euteleostomi</taxon>
        <taxon>Mammalia</taxon>
        <taxon>Eutheria</taxon>
        <taxon>Euarchontoglires</taxon>
        <taxon>Glires</taxon>
        <taxon>Rodentia</taxon>
        <taxon>Myomorpha</taxon>
        <taxon>Muroidea</taxon>
        <taxon>Muridae</taxon>
        <taxon>Murinae</taxon>
        <taxon>Mus</taxon>
        <taxon>Mus</taxon>
    </lineage>
</organism>
<name>GRIK3_MOUSE</name>